<sequence>MRFRLNDSFSGKSWTIDNVQWTPQNLVAWIMELNIGLSDEAKLLLPNGMSLNETVLNSESDVVIYVLDQNLLTFTYDGDKIPSIPSLKGQPISNVLTGIIADSSSDQWKDKISKCLSLLSDILESSSKIHNQLSVCHDEYSTSIVSPEVAMNYLQRRQSGMKDLLFVFYERLDRVSVSDLLHDFLALPTGSLPITPLKILSTNWTKLDSWLNSISARYAEAQKRVQQCIGAANSIIVSPFKEVPSIKEGDDAYYHLRSVAQDAANILQEILKIESTSTTSQIKPKCNYETEITDCMEKLQSNLSELKSSRKSSLISLKSFWLSFYKVSLRYDALYEYLRQIAEELDRSKFVLSQSRNIFSLYIDILMEALRRTEWQESYNVSHDSSLPLDQEKELSLRKSWLSHFSNLLFNHGQLKYLPVLTRDEISNYLLNIQAHPNYQTFHQMLSNRLSEYLGFPGSPREAVSNTVQANNSLHEKLAMYQNRCNNLEAMLSHQNGFNYNINNDGLSPNAPHPPINEQSNSSQPFYRVSPSIVPLNVIRKLTNRKTSFTDSHILRLQDEVNQLRNELDLVNKRNEDLLIELQGKEEKIQYLETENEEVLQKYENLQEELSSTRKLLTKNEAAVAEQQSNEEMHSNEPNILNLYSVFEGKVDSLQELYNAFKLQLTSLKQKGEYATLAKDAEAVQHIIEERDYALAEKADLLKLSENRKEQCKILTQKLYTIVFRCNELQSVLRECVTQPGFDSDNERDGHASIPDRQIEFNSKDLQYLYWMDGEDADRNFQEFLNRMSSLDFDSFHNFVVSVLTQAHNHELRWKREFQSNRDKALKAILDSQSKVSLRNFKQGSLVLFLPTRRTAGNKKVWAAFNVNAPHYYLNTQPHLKLESRDWMLGRVTSIEDRTADDSTDKWLRLPSGTIWHLVEAIDERF</sequence>
<evidence type="ECO:0000250" key="1"/>
<evidence type="ECO:0000255" key="2"/>
<evidence type="ECO:0000269" key="3">
    <source>
    </source>
</evidence>
<evidence type="ECO:0000269" key="4">
    <source>
    </source>
</evidence>
<evidence type="ECO:0000269" key="5">
    <source>
    </source>
</evidence>
<evidence type="ECO:0000305" key="6"/>
<dbReference type="EMBL" id="CU329670">
    <property type="protein sequence ID" value="CAB16721.2"/>
    <property type="molecule type" value="Genomic_DNA"/>
</dbReference>
<dbReference type="PIR" id="T39082">
    <property type="entry name" value="T39082"/>
</dbReference>
<dbReference type="RefSeq" id="NP_593855.1">
    <property type="nucleotide sequence ID" value="NM_001019284.2"/>
</dbReference>
<dbReference type="SMR" id="O14261"/>
<dbReference type="BioGRID" id="278229">
    <property type="interactions" value="86"/>
</dbReference>
<dbReference type="ComplexPortal" id="CPX-25773">
    <property type="entry name" value="Atg1/ULK1 protein kinase complex"/>
</dbReference>
<dbReference type="FunCoup" id="O14261">
    <property type="interactions" value="20"/>
</dbReference>
<dbReference type="IntAct" id="O14261">
    <property type="interactions" value="10"/>
</dbReference>
<dbReference type="STRING" id="284812.O14261"/>
<dbReference type="iPTMnet" id="O14261"/>
<dbReference type="PaxDb" id="4896-SPAC7D4.04.1"/>
<dbReference type="EnsemblFungi" id="SPAC7D4.04.1">
    <property type="protein sequence ID" value="SPAC7D4.04.1:pep"/>
    <property type="gene ID" value="SPAC7D4.04"/>
</dbReference>
<dbReference type="GeneID" id="2541735"/>
<dbReference type="KEGG" id="spo:2541735"/>
<dbReference type="PomBase" id="SPAC7D4.04"/>
<dbReference type="VEuPathDB" id="FungiDB:SPAC7D4.04"/>
<dbReference type="eggNOG" id="ENOG502QVZE">
    <property type="taxonomic scope" value="Eukaryota"/>
</dbReference>
<dbReference type="HOGENOM" id="CLU_318616_0_0_1"/>
<dbReference type="InParanoid" id="O14261"/>
<dbReference type="OMA" id="WKREFQS"/>
<dbReference type="PhylomeDB" id="O14261"/>
<dbReference type="Reactome" id="R-SPO-1632852">
    <property type="pathway name" value="Macroautophagy"/>
</dbReference>
<dbReference type="PRO" id="PR:O14261"/>
<dbReference type="Proteomes" id="UP000002485">
    <property type="component" value="Chromosome I"/>
</dbReference>
<dbReference type="GO" id="GO:1990316">
    <property type="term" value="C:Atg1/ULK1 kinase complex"/>
    <property type="evidence" value="ECO:0000269"/>
    <property type="project" value="PomBase"/>
</dbReference>
<dbReference type="GO" id="GO:0005737">
    <property type="term" value="C:cytoplasm"/>
    <property type="evidence" value="ECO:0007005"/>
    <property type="project" value="PomBase"/>
</dbReference>
<dbReference type="GO" id="GO:0000329">
    <property type="term" value="C:fungal-type vacuole membrane"/>
    <property type="evidence" value="ECO:0000314"/>
    <property type="project" value="PomBase"/>
</dbReference>
<dbReference type="GO" id="GO:0005634">
    <property type="term" value="C:nucleus"/>
    <property type="evidence" value="ECO:0007005"/>
    <property type="project" value="PomBase"/>
</dbReference>
<dbReference type="GO" id="GO:0000407">
    <property type="term" value="C:phagophore assembly site"/>
    <property type="evidence" value="ECO:0000314"/>
    <property type="project" value="PomBase"/>
</dbReference>
<dbReference type="GO" id="GO:0034045">
    <property type="term" value="C:phagophore assembly site membrane"/>
    <property type="evidence" value="ECO:0000318"/>
    <property type="project" value="GO_Central"/>
</dbReference>
<dbReference type="GO" id="GO:0060090">
    <property type="term" value="F:molecular adaptor activity"/>
    <property type="evidence" value="ECO:0000318"/>
    <property type="project" value="GO_Central"/>
</dbReference>
<dbReference type="GO" id="GO:0019901">
    <property type="term" value="F:protein kinase binding"/>
    <property type="evidence" value="ECO:0000318"/>
    <property type="project" value="GO_Central"/>
</dbReference>
<dbReference type="GO" id="GO:0043539">
    <property type="term" value="F:protein serine/threonine kinase activator activity"/>
    <property type="evidence" value="ECO:0000314"/>
    <property type="project" value="PomBase"/>
</dbReference>
<dbReference type="GO" id="GO:0000045">
    <property type="term" value="P:autophagosome assembly"/>
    <property type="evidence" value="ECO:0000318"/>
    <property type="project" value="GO_Central"/>
</dbReference>
<dbReference type="GO" id="GO:0000422">
    <property type="term" value="P:autophagy of mitochondrion"/>
    <property type="evidence" value="ECO:0000318"/>
    <property type="project" value="GO_Central"/>
</dbReference>
<dbReference type="GO" id="GO:0006995">
    <property type="term" value="P:cellular response to nitrogen starvation"/>
    <property type="evidence" value="ECO:0000315"/>
    <property type="project" value="UniProtKB"/>
</dbReference>
<dbReference type="GO" id="GO:0016236">
    <property type="term" value="P:macroautophagy"/>
    <property type="evidence" value="ECO:0000315"/>
    <property type="project" value="PomBase"/>
</dbReference>
<dbReference type="GO" id="GO:0000423">
    <property type="term" value="P:mitophagy"/>
    <property type="evidence" value="ECO:0000315"/>
    <property type="project" value="PomBase"/>
</dbReference>
<dbReference type="GO" id="GO:0000425">
    <property type="term" value="P:pexophagy"/>
    <property type="evidence" value="ECO:0000318"/>
    <property type="project" value="GO_Central"/>
</dbReference>
<dbReference type="GO" id="GO:0034727">
    <property type="term" value="P:piecemeal microautophagy of the nucleus"/>
    <property type="evidence" value="ECO:0000318"/>
    <property type="project" value="GO_Central"/>
</dbReference>
<dbReference type="GO" id="GO:0015031">
    <property type="term" value="P:protein transport"/>
    <property type="evidence" value="ECO:0007669"/>
    <property type="project" value="UniProtKB-KW"/>
</dbReference>
<dbReference type="GO" id="GO:0061709">
    <property type="term" value="P:reticulophagy"/>
    <property type="evidence" value="ECO:0000318"/>
    <property type="project" value="GO_Central"/>
</dbReference>
<dbReference type="GO" id="GO:0034517">
    <property type="term" value="P:ribophagy"/>
    <property type="evidence" value="ECO:0000318"/>
    <property type="project" value="GO_Central"/>
</dbReference>
<dbReference type="InterPro" id="IPR040040">
    <property type="entry name" value="ATG11"/>
</dbReference>
<dbReference type="InterPro" id="IPR019460">
    <property type="entry name" value="Atg11_C"/>
</dbReference>
<dbReference type="InterPro" id="IPR045593">
    <property type="entry name" value="Atg11_middle"/>
</dbReference>
<dbReference type="InterPro" id="IPR045326">
    <property type="entry name" value="ATG17-like_dom"/>
</dbReference>
<dbReference type="PANTHER" id="PTHR13222">
    <property type="entry name" value="RB1-INDUCIBLE COILED-COIL"/>
    <property type="match status" value="1"/>
</dbReference>
<dbReference type="PANTHER" id="PTHR13222:SF1">
    <property type="entry name" value="RB1-INDUCIBLE COILED-COIL PROTEIN 1"/>
    <property type="match status" value="1"/>
</dbReference>
<dbReference type="Pfam" id="PF10377">
    <property type="entry name" value="ATG11"/>
    <property type="match status" value="1"/>
</dbReference>
<dbReference type="Pfam" id="PF19697">
    <property type="entry name" value="Atg11_middle"/>
    <property type="match status" value="1"/>
</dbReference>
<dbReference type="Pfam" id="PF04108">
    <property type="entry name" value="ATG17_like"/>
    <property type="match status" value="1"/>
</dbReference>
<keyword id="KW-0072">Autophagy</keyword>
<keyword id="KW-0175">Coiled coil</keyword>
<keyword id="KW-0472">Membrane</keyword>
<keyword id="KW-0597">Phosphoprotein</keyword>
<keyword id="KW-0653">Protein transport</keyword>
<keyword id="KW-1185">Reference proteome</keyword>
<keyword id="KW-0813">Transport</keyword>
<keyword id="KW-0926">Vacuole</keyword>
<feature type="chain" id="PRO_0000072418" description="Taz1-interacting factor 1">
    <location>
        <begin position="1"/>
        <end position="926"/>
    </location>
</feature>
<feature type="coiled-coil region" evidence="2">
    <location>
        <begin position="461"/>
        <end position="496"/>
    </location>
</feature>
<feature type="coiled-coil region" evidence="2">
    <location>
        <begin position="548"/>
        <end position="671"/>
    </location>
</feature>
<feature type="modified residue" description="Phosphoserine" evidence="4">
    <location>
        <position position="548"/>
    </location>
</feature>
<feature type="modified residue" description="Phosphothreonine" evidence="4">
    <location>
        <position position="550"/>
    </location>
</feature>
<feature type="modified residue" description="Phosphoserine" evidence="4">
    <location>
        <position position="552"/>
    </location>
</feature>
<proteinExistence type="evidence at protein level"/>
<name>ATG11_SCHPO</name>
<protein>
    <recommendedName>
        <fullName>Taz1-interacting factor 1</fullName>
        <shortName>Protein taf1</shortName>
    </recommendedName>
    <alternativeName>
        <fullName>Autophagy-related protein 11</fullName>
    </alternativeName>
    <alternativeName>
        <fullName>Cytoplasm to vacuole targeting protein 9</fullName>
    </alternativeName>
</protein>
<accession>O14261</accession>
<comment type="function">
    <text evidence="1 3">Involved in cytoplasm to vacuole transport (Cvt), pexophagy, mitophagy and nucleophagy. Recruits mitochondria for their selective degradation via autophagy (mitophagy) during starvation. Works as scaffold proteins that recruit ATG proteins to the preautophagosome (PAS), the site of vesicle/autophagosome formation. Required for atg9 anterograde transport from the mitochondria to the PAS (By similarity). Required for nitrogen starvation-induced sexual development and for entering the dormant G0 state (By similarity).</text>
</comment>
<comment type="subunit">
    <text evidence="1 3">Homodimer and potential homooligomers (By similarity). Interacts with taz1.</text>
</comment>
<comment type="subcellular location">
    <subcellularLocation>
        <location evidence="5">Preautophagosomal structure membrane</location>
        <topology evidence="5">Peripheral membrane protein</topology>
    </subcellularLocation>
    <subcellularLocation>
        <location evidence="5">Vacuole membrane</location>
        <topology evidence="5">Peripheral membrane protein</topology>
    </subcellularLocation>
</comment>
<comment type="disruption phenotype">
    <text evidence="5">Impairs atg8-processing.</text>
</comment>
<comment type="similarity">
    <text evidence="6">Belongs to the ATG11 family.</text>
</comment>
<reference evidence="6" key="1">
    <citation type="journal article" date="2002" name="Nature">
        <title>The genome sequence of Schizosaccharomyces pombe.</title>
        <authorList>
            <person name="Wood V."/>
            <person name="Gwilliam R."/>
            <person name="Rajandream M.A."/>
            <person name="Lyne M.H."/>
            <person name="Lyne R."/>
            <person name="Stewart A."/>
            <person name="Sgouros J.G."/>
            <person name="Peat N."/>
            <person name="Hayles J."/>
            <person name="Baker S.G."/>
            <person name="Basham D."/>
            <person name="Bowman S."/>
            <person name="Brooks K."/>
            <person name="Brown D."/>
            <person name="Brown S."/>
            <person name="Chillingworth T."/>
            <person name="Churcher C.M."/>
            <person name="Collins M."/>
            <person name="Connor R."/>
            <person name="Cronin A."/>
            <person name="Davis P."/>
            <person name="Feltwell T."/>
            <person name="Fraser A."/>
            <person name="Gentles S."/>
            <person name="Goble A."/>
            <person name="Hamlin N."/>
            <person name="Harris D.E."/>
            <person name="Hidalgo J."/>
            <person name="Hodgson G."/>
            <person name="Holroyd S."/>
            <person name="Hornsby T."/>
            <person name="Howarth S."/>
            <person name="Huckle E.J."/>
            <person name="Hunt S."/>
            <person name="Jagels K."/>
            <person name="James K.D."/>
            <person name="Jones L."/>
            <person name="Jones M."/>
            <person name="Leather S."/>
            <person name="McDonald S."/>
            <person name="McLean J."/>
            <person name="Mooney P."/>
            <person name="Moule S."/>
            <person name="Mungall K.L."/>
            <person name="Murphy L.D."/>
            <person name="Niblett D."/>
            <person name="Odell C."/>
            <person name="Oliver K."/>
            <person name="O'Neil S."/>
            <person name="Pearson D."/>
            <person name="Quail M.A."/>
            <person name="Rabbinowitsch E."/>
            <person name="Rutherford K.M."/>
            <person name="Rutter S."/>
            <person name="Saunders D."/>
            <person name="Seeger K."/>
            <person name="Sharp S."/>
            <person name="Skelton J."/>
            <person name="Simmonds M.N."/>
            <person name="Squares R."/>
            <person name="Squares S."/>
            <person name="Stevens K."/>
            <person name="Taylor K."/>
            <person name="Taylor R.G."/>
            <person name="Tivey A."/>
            <person name="Walsh S.V."/>
            <person name="Warren T."/>
            <person name="Whitehead S."/>
            <person name="Woodward J.R."/>
            <person name="Volckaert G."/>
            <person name="Aert R."/>
            <person name="Robben J."/>
            <person name="Grymonprez B."/>
            <person name="Weltjens I."/>
            <person name="Vanstreels E."/>
            <person name="Rieger M."/>
            <person name="Schaefer M."/>
            <person name="Mueller-Auer S."/>
            <person name="Gabel C."/>
            <person name="Fuchs M."/>
            <person name="Duesterhoeft A."/>
            <person name="Fritzc C."/>
            <person name="Holzer E."/>
            <person name="Moestl D."/>
            <person name="Hilbert H."/>
            <person name="Borzym K."/>
            <person name="Langer I."/>
            <person name="Beck A."/>
            <person name="Lehrach H."/>
            <person name="Reinhardt R."/>
            <person name="Pohl T.M."/>
            <person name="Eger P."/>
            <person name="Zimmermann W."/>
            <person name="Wedler H."/>
            <person name="Wambutt R."/>
            <person name="Purnelle B."/>
            <person name="Goffeau A."/>
            <person name="Cadieu E."/>
            <person name="Dreano S."/>
            <person name="Gloux S."/>
            <person name="Lelaure V."/>
            <person name="Mottier S."/>
            <person name="Galibert F."/>
            <person name="Aves S.J."/>
            <person name="Xiang Z."/>
            <person name="Hunt C."/>
            <person name="Moore K."/>
            <person name="Hurst S.M."/>
            <person name="Lucas M."/>
            <person name="Rochet M."/>
            <person name="Gaillardin C."/>
            <person name="Tallada V.A."/>
            <person name="Garzon A."/>
            <person name="Thode G."/>
            <person name="Daga R.R."/>
            <person name="Cruzado L."/>
            <person name="Jimenez J."/>
            <person name="Sanchez M."/>
            <person name="del Rey F."/>
            <person name="Benito J."/>
            <person name="Dominguez A."/>
            <person name="Revuelta J.L."/>
            <person name="Moreno S."/>
            <person name="Armstrong J."/>
            <person name="Forsburg S.L."/>
            <person name="Cerutti L."/>
            <person name="Lowe T."/>
            <person name="McCombie W.R."/>
            <person name="Paulsen I."/>
            <person name="Potashkin J."/>
            <person name="Shpakovski G.V."/>
            <person name="Ussery D."/>
            <person name="Barrell B.G."/>
            <person name="Nurse P."/>
        </authorList>
    </citation>
    <scope>NUCLEOTIDE SEQUENCE [LARGE SCALE GENOMIC DNA]</scope>
    <source>
        <strain>972 / ATCC 24843</strain>
    </source>
</reference>
<reference evidence="6" key="2">
    <citation type="journal article" date="2001" name="Curr. Genet.">
        <title>Schizosaccharomyces pombe taf1+ is required for nitrogen starvation-induced sexual development and for entering the dormant GO state.</title>
        <authorList>
            <person name="Ueno M."/>
            <person name="Kurokawa R."/>
            <person name="Renauld H."/>
            <person name="Watanabe K."/>
            <person name="Ushimaru T."/>
            <person name="Uritani M."/>
            <person name="Yoshinaga K."/>
            <person name="Hiraoka Y."/>
        </authorList>
    </citation>
    <scope>FUNCTION</scope>
    <scope>INTERACTION WITH TAZ1</scope>
</reference>
<reference key="3">
    <citation type="journal article" date="2008" name="J. Proteome Res.">
        <title>Phosphoproteome analysis of fission yeast.</title>
        <authorList>
            <person name="Wilson-Grady J.T."/>
            <person name="Villen J."/>
            <person name="Gygi S.P."/>
        </authorList>
    </citation>
    <scope>PHOSPHORYLATION [LARGE SCALE ANALYSIS] AT SER-548; THR-550 AND SER-552</scope>
    <scope>IDENTIFICATION BY MASS SPECTROMETRY</scope>
</reference>
<reference key="4">
    <citation type="journal article" date="2013" name="PLoS Genet.">
        <title>Global analysis of fission yeast mating genes reveals new autophagy factors.</title>
        <authorList>
            <person name="Sun L.L."/>
            <person name="Li M."/>
            <person name="Suo F."/>
            <person name="Liu X.M."/>
            <person name="Shen E.Z."/>
            <person name="Yang B."/>
            <person name="Dong M.Q."/>
            <person name="He W.Z."/>
            <person name="Du L.L."/>
        </authorList>
    </citation>
    <scope>DISRUPTION PHENOTYPE</scope>
    <scope>SUBCELLULAR LOCATION</scope>
</reference>
<gene>
    <name type="primary">taf1</name>
    <name type="synonym">atg11</name>
    <name type="synonym">cvt9</name>
    <name type="ORF">SPAC7D4.04</name>
</gene>
<organism>
    <name type="scientific">Schizosaccharomyces pombe (strain 972 / ATCC 24843)</name>
    <name type="common">Fission yeast</name>
    <dbReference type="NCBI Taxonomy" id="284812"/>
    <lineage>
        <taxon>Eukaryota</taxon>
        <taxon>Fungi</taxon>
        <taxon>Dikarya</taxon>
        <taxon>Ascomycota</taxon>
        <taxon>Taphrinomycotina</taxon>
        <taxon>Schizosaccharomycetes</taxon>
        <taxon>Schizosaccharomycetales</taxon>
        <taxon>Schizosaccharomycetaceae</taxon>
        <taxon>Schizosaccharomyces</taxon>
    </lineage>
</organism>